<accession>Q8EUD6</accession>
<proteinExistence type="inferred from homology"/>
<name>RS13_MALP2</name>
<sequence>MARILGVDIPNNKRVVISLTYIFGIGKSRSQEILSKAKIDENKKVSALSEEELATIRKIASEYVIEGDLRREVAMNIKRLMEIGSYRGIRHRRNLPVRGQRTKCNARTRKGPRKTVANKKIETK</sequence>
<organism>
    <name type="scientific">Malacoplasma penetrans (strain HF-2)</name>
    <name type="common">Mycoplasma penetrans</name>
    <dbReference type="NCBI Taxonomy" id="272633"/>
    <lineage>
        <taxon>Bacteria</taxon>
        <taxon>Bacillati</taxon>
        <taxon>Mycoplasmatota</taxon>
        <taxon>Mycoplasmoidales</taxon>
        <taxon>Mycoplasmoidaceae</taxon>
        <taxon>Malacoplasma</taxon>
    </lineage>
</organism>
<comment type="function">
    <text evidence="1">Located at the top of the head of the 30S subunit, it contacts several helices of the 16S rRNA. In the 70S ribosome it contacts the 23S rRNA (bridge B1a) and protein L5 of the 50S subunit (bridge B1b), connecting the 2 subunits; these bridges are implicated in subunit movement. Contacts the tRNAs in the A and P-sites.</text>
</comment>
<comment type="subunit">
    <text evidence="1">Part of the 30S ribosomal subunit. Forms a loose heterodimer with protein S19. Forms two bridges to the 50S subunit in the 70S ribosome.</text>
</comment>
<comment type="similarity">
    <text evidence="1">Belongs to the universal ribosomal protein uS13 family.</text>
</comment>
<gene>
    <name evidence="1" type="primary">rpsM</name>
    <name type="ordered locus">MYPE9940</name>
</gene>
<reference key="1">
    <citation type="journal article" date="2002" name="Nucleic Acids Res.">
        <title>The complete genomic sequence of Mycoplasma penetrans, an intracellular bacterial pathogen in humans.</title>
        <authorList>
            <person name="Sasaki Y."/>
            <person name="Ishikawa J."/>
            <person name="Yamashita A."/>
            <person name="Oshima K."/>
            <person name="Kenri T."/>
            <person name="Furuya K."/>
            <person name="Yoshino C."/>
            <person name="Horino A."/>
            <person name="Shiba T."/>
            <person name="Sasaki T."/>
            <person name="Hattori M."/>
        </authorList>
    </citation>
    <scope>NUCLEOTIDE SEQUENCE [LARGE SCALE GENOMIC DNA]</scope>
    <source>
        <strain>HF-2</strain>
    </source>
</reference>
<protein>
    <recommendedName>
        <fullName evidence="1">Small ribosomal subunit protein uS13</fullName>
    </recommendedName>
    <alternativeName>
        <fullName evidence="3">30S ribosomal protein S13</fullName>
    </alternativeName>
</protein>
<dbReference type="EMBL" id="BA000026">
    <property type="protein sequence ID" value="BAC44780.1"/>
    <property type="molecule type" value="Genomic_DNA"/>
</dbReference>
<dbReference type="RefSeq" id="WP_011077808.1">
    <property type="nucleotide sequence ID" value="NC_004432.1"/>
</dbReference>
<dbReference type="SMR" id="Q8EUD6"/>
<dbReference type="FunCoup" id="Q8EUD6">
    <property type="interactions" value="268"/>
</dbReference>
<dbReference type="STRING" id="272633.gene:10732114"/>
<dbReference type="KEGG" id="mpe:MYPE9940"/>
<dbReference type="eggNOG" id="COG0099">
    <property type="taxonomic scope" value="Bacteria"/>
</dbReference>
<dbReference type="HOGENOM" id="CLU_103849_1_2_14"/>
<dbReference type="InParanoid" id="Q8EUD6"/>
<dbReference type="Proteomes" id="UP000002522">
    <property type="component" value="Chromosome"/>
</dbReference>
<dbReference type="GO" id="GO:0005829">
    <property type="term" value="C:cytosol"/>
    <property type="evidence" value="ECO:0007669"/>
    <property type="project" value="TreeGrafter"/>
</dbReference>
<dbReference type="GO" id="GO:0015935">
    <property type="term" value="C:small ribosomal subunit"/>
    <property type="evidence" value="ECO:0007669"/>
    <property type="project" value="TreeGrafter"/>
</dbReference>
<dbReference type="GO" id="GO:0019843">
    <property type="term" value="F:rRNA binding"/>
    <property type="evidence" value="ECO:0007669"/>
    <property type="project" value="UniProtKB-UniRule"/>
</dbReference>
<dbReference type="GO" id="GO:0003735">
    <property type="term" value="F:structural constituent of ribosome"/>
    <property type="evidence" value="ECO:0007669"/>
    <property type="project" value="InterPro"/>
</dbReference>
<dbReference type="GO" id="GO:0000049">
    <property type="term" value="F:tRNA binding"/>
    <property type="evidence" value="ECO:0007669"/>
    <property type="project" value="UniProtKB-UniRule"/>
</dbReference>
<dbReference type="GO" id="GO:0006412">
    <property type="term" value="P:translation"/>
    <property type="evidence" value="ECO:0007669"/>
    <property type="project" value="UniProtKB-UniRule"/>
</dbReference>
<dbReference type="FunFam" id="1.10.8.50:FF:000001">
    <property type="entry name" value="30S ribosomal protein S13"/>
    <property type="match status" value="1"/>
</dbReference>
<dbReference type="FunFam" id="4.10.910.10:FF:000001">
    <property type="entry name" value="30S ribosomal protein S13"/>
    <property type="match status" value="1"/>
</dbReference>
<dbReference type="Gene3D" id="1.10.8.50">
    <property type="match status" value="1"/>
</dbReference>
<dbReference type="Gene3D" id="4.10.910.10">
    <property type="entry name" value="30s ribosomal protein s13, domain 2"/>
    <property type="match status" value="1"/>
</dbReference>
<dbReference type="HAMAP" id="MF_01315">
    <property type="entry name" value="Ribosomal_uS13"/>
    <property type="match status" value="1"/>
</dbReference>
<dbReference type="InterPro" id="IPR027437">
    <property type="entry name" value="Rbsml_uS13_C"/>
</dbReference>
<dbReference type="InterPro" id="IPR001892">
    <property type="entry name" value="Ribosomal_uS13"/>
</dbReference>
<dbReference type="InterPro" id="IPR010979">
    <property type="entry name" value="Ribosomal_uS13-like_H2TH"/>
</dbReference>
<dbReference type="InterPro" id="IPR019980">
    <property type="entry name" value="Ribosomal_uS13_bac-type"/>
</dbReference>
<dbReference type="InterPro" id="IPR018269">
    <property type="entry name" value="Ribosomal_uS13_CS"/>
</dbReference>
<dbReference type="NCBIfam" id="TIGR03631">
    <property type="entry name" value="uS13_bact"/>
    <property type="match status" value="1"/>
</dbReference>
<dbReference type="PANTHER" id="PTHR10871">
    <property type="entry name" value="30S RIBOSOMAL PROTEIN S13/40S RIBOSOMAL PROTEIN S18"/>
    <property type="match status" value="1"/>
</dbReference>
<dbReference type="PANTHER" id="PTHR10871:SF1">
    <property type="entry name" value="SMALL RIBOSOMAL SUBUNIT PROTEIN US13M"/>
    <property type="match status" value="1"/>
</dbReference>
<dbReference type="Pfam" id="PF00416">
    <property type="entry name" value="Ribosomal_S13"/>
    <property type="match status" value="1"/>
</dbReference>
<dbReference type="PIRSF" id="PIRSF002134">
    <property type="entry name" value="Ribosomal_S13"/>
    <property type="match status" value="1"/>
</dbReference>
<dbReference type="SUPFAM" id="SSF46946">
    <property type="entry name" value="S13-like H2TH domain"/>
    <property type="match status" value="1"/>
</dbReference>
<dbReference type="PROSITE" id="PS00646">
    <property type="entry name" value="RIBOSOMAL_S13_1"/>
    <property type="match status" value="1"/>
</dbReference>
<dbReference type="PROSITE" id="PS50159">
    <property type="entry name" value="RIBOSOMAL_S13_2"/>
    <property type="match status" value="1"/>
</dbReference>
<feature type="chain" id="PRO_0000132109" description="Small ribosomal subunit protein uS13">
    <location>
        <begin position="1"/>
        <end position="124"/>
    </location>
</feature>
<feature type="region of interest" description="Disordered" evidence="2">
    <location>
        <begin position="103"/>
        <end position="124"/>
    </location>
</feature>
<feature type="compositionally biased region" description="Basic residues" evidence="2">
    <location>
        <begin position="103"/>
        <end position="117"/>
    </location>
</feature>
<keyword id="KW-1185">Reference proteome</keyword>
<keyword id="KW-0687">Ribonucleoprotein</keyword>
<keyword id="KW-0689">Ribosomal protein</keyword>
<keyword id="KW-0694">RNA-binding</keyword>
<keyword id="KW-0699">rRNA-binding</keyword>
<keyword id="KW-0820">tRNA-binding</keyword>
<evidence type="ECO:0000255" key="1">
    <source>
        <dbReference type="HAMAP-Rule" id="MF_01315"/>
    </source>
</evidence>
<evidence type="ECO:0000256" key="2">
    <source>
        <dbReference type="SAM" id="MobiDB-lite"/>
    </source>
</evidence>
<evidence type="ECO:0000305" key="3"/>